<name>Y1571_STRZP</name>
<protein>
    <recommendedName>
        <fullName evidence="1">UPF0246 protein SPP_1571</fullName>
    </recommendedName>
</protein>
<comment type="similarity">
    <text evidence="1">Belongs to the UPF0246 family.</text>
</comment>
<evidence type="ECO:0000255" key="1">
    <source>
        <dbReference type="HAMAP-Rule" id="MF_00652"/>
    </source>
</evidence>
<reference key="1">
    <citation type="journal article" date="2010" name="Genome Biol.">
        <title>Structure and dynamics of the pan-genome of Streptococcus pneumoniae and closely related species.</title>
        <authorList>
            <person name="Donati C."/>
            <person name="Hiller N.L."/>
            <person name="Tettelin H."/>
            <person name="Muzzi A."/>
            <person name="Croucher N.J."/>
            <person name="Angiuoli S.V."/>
            <person name="Oggioni M."/>
            <person name="Dunning Hotopp J.C."/>
            <person name="Hu F.Z."/>
            <person name="Riley D.R."/>
            <person name="Covacci A."/>
            <person name="Mitchell T.J."/>
            <person name="Bentley S.D."/>
            <person name="Kilian M."/>
            <person name="Ehrlich G.D."/>
            <person name="Rappuoli R."/>
            <person name="Moxon E.R."/>
            <person name="Masignani V."/>
        </authorList>
    </citation>
    <scope>NUCLEOTIDE SEQUENCE [LARGE SCALE GENOMIC DNA]</scope>
    <source>
        <strain>P1031</strain>
    </source>
</reference>
<feature type="chain" id="PRO_1000200430" description="UPF0246 protein SPP_1571">
    <location>
        <begin position="1"/>
        <end position="242"/>
    </location>
</feature>
<accession>C1CLP7</accession>
<dbReference type="EMBL" id="CP000920">
    <property type="protein sequence ID" value="ACO21998.1"/>
    <property type="molecule type" value="Genomic_DNA"/>
</dbReference>
<dbReference type="SMR" id="C1CLP7"/>
<dbReference type="KEGG" id="spp:SPP_1571"/>
<dbReference type="HOGENOM" id="CLU_061989_2_1_9"/>
<dbReference type="GO" id="GO:0005829">
    <property type="term" value="C:cytosol"/>
    <property type="evidence" value="ECO:0007669"/>
    <property type="project" value="TreeGrafter"/>
</dbReference>
<dbReference type="GO" id="GO:0033194">
    <property type="term" value="P:response to hydroperoxide"/>
    <property type="evidence" value="ECO:0007669"/>
    <property type="project" value="TreeGrafter"/>
</dbReference>
<dbReference type="HAMAP" id="MF_00652">
    <property type="entry name" value="UPF0246"/>
    <property type="match status" value="1"/>
</dbReference>
<dbReference type="InterPro" id="IPR005583">
    <property type="entry name" value="YaaA"/>
</dbReference>
<dbReference type="NCBIfam" id="NF002543">
    <property type="entry name" value="PRK02101.1-4"/>
    <property type="match status" value="1"/>
</dbReference>
<dbReference type="PANTHER" id="PTHR30283:SF4">
    <property type="entry name" value="PEROXIDE STRESS RESISTANCE PROTEIN YAAA"/>
    <property type="match status" value="1"/>
</dbReference>
<dbReference type="PANTHER" id="PTHR30283">
    <property type="entry name" value="PEROXIDE STRESS RESPONSE PROTEIN YAAA"/>
    <property type="match status" value="1"/>
</dbReference>
<dbReference type="Pfam" id="PF03883">
    <property type="entry name" value="H2O2_YaaD"/>
    <property type="match status" value="1"/>
</dbReference>
<gene>
    <name type="ordered locus">SPP_1571</name>
</gene>
<proteinExistence type="inferred from homology"/>
<organism>
    <name type="scientific">Streptococcus pneumoniae (strain P1031)</name>
    <dbReference type="NCBI Taxonomy" id="488223"/>
    <lineage>
        <taxon>Bacteria</taxon>
        <taxon>Bacillati</taxon>
        <taxon>Bacillota</taxon>
        <taxon>Bacilli</taxon>
        <taxon>Lactobacillales</taxon>
        <taxon>Streptococcaceae</taxon>
        <taxon>Streptococcus</taxon>
    </lineage>
</organism>
<sequence length="242" mass="27432">MKILIPTAKEMNTDLPSIEAIPLKPESQAVLDALALYSASQLESFYKVSAEKAAEEFQNIQALKRQTAQHYPALKLFDGLMYRNIKRDKLTEAEQDYLENHVFITSALYGVVPVLSPMAPHRLDFLMKLKVAGKTLKSHWKAAYDETLKKEEVIFSLLSSEFETVFSKEIRAKMVTLKFMEDRGGQLKIHSTISKKARGAFLTALIENQVQTVGEARRLNFAGFVYREDLSQPQGLVFVKEV</sequence>